<feature type="chain" id="PRO_0000319410" description="Cellulose synthase-like protein H1">
    <location>
        <begin position="1"/>
        <end position="750"/>
    </location>
</feature>
<feature type="transmembrane region" description="Helical" evidence="1">
    <location>
        <begin position="27"/>
        <end position="47"/>
    </location>
</feature>
<feature type="transmembrane region" description="Helical" evidence="1">
    <location>
        <begin position="52"/>
        <end position="72"/>
    </location>
</feature>
<feature type="transmembrane region" description="Helical" evidence="1">
    <location>
        <begin position="537"/>
        <end position="557"/>
    </location>
</feature>
<feature type="transmembrane region" description="Helical" evidence="1">
    <location>
        <begin position="570"/>
        <end position="590"/>
    </location>
</feature>
<feature type="transmembrane region" description="Helical" evidence="1">
    <location>
        <begin position="608"/>
        <end position="628"/>
    </location>
</feature>
<feature type="transmembrane region" description="Helical" evidence="1">
    <location>
        <begin position="664"/>
        <end position="684"/>
    </location>
</feature>
<feature type="transmembrane region" description="Helical" evidence="1">
    <location>
        <begin position="697"/>
        <end position="717"/>
    </location>
</feature>
<feature type="transmembrane region" description="Helical" evidence="1">
    <location>
        <begin position="727"/>
        <end position="747"/>
    </location>
</feature>
<feature type="active site" evidence="1">
    <location>
        <position position="137"/>
    </location>
</feature>
<feature type="active site" evidence="1">
    <location>
        <position position="459"/>
    </location>
</feature>
<feature type="sequence conflict" description="In Ref. 6; AAL38531." evidence="2" ref="6">
    <original>NKKL</original>
    <variation>PRVR</variation>
    <location>
        <begin position="8"/>
        <end position="11"/>
    </location>
</feature>
<dbReference type="EC" id="2.4.1.-"/>
<dbReference type="EMBL" id="AC119148">
    <property type="protein sequence ID" value="AAN01252.1"/>
    <property type="status" value="ALT_SEQ"/>
    <property type="molecule type" value="Genomic_DNA"/>
</dbReference>
<dbReference type="EMBL" id="DP000086">
    <property type="protein sequence ID" value="ABB47242.2"/>
    <property type="molecule type" value="Genomic_DNA"/>
</dbReference>
<dbReference type="EMBL" id="AP008216">
    <property type="protein sequence ID" value="BAF26298.1"/>
    <property type="molecule type" value="Genomic_DNA"/>
</dbReference>
<dbReference type="EMBL" id="AP014966">
    <property type="protein sequence ID" value="BAT10412.1"/>
    <property type="molecule type" value="Genomic_DNA"/>
</dbReference>
<dbReference type="EMBL" id="AK069071">
    <property type="protein sequence ID" value="BAG91240.1"/>
    <property type="molecule type" value="mRNA"/>
</dbReference>
<dbReference type="EMBL" id="AF435646">
    <property type="protein sequence ID" value="AAL38531.1"/>
    <property type="molecule type" value="mRNA"/>
</dbReference>
<dbReference type="EMBL" id="BK000084">
    <property type="protein sequence ID" value="DAA01747.1"/>
    <property type="molecule type" value="Genomic_DNA"/>
</dbReference>
<dbReference type="RefSeq" id="XP_015614519.1">
    <property type="nucleotide sequence ID" value="XM_015759033.1"/>
</dbReference>
<dbReference type="SMR" id="Q339N5"/>
<dbReference type="FunCoup" id="Q339N5">
    <property type="interactions" value="336"/>
</dbReference>
<dbReference type="STRING" id="39947.Q339N5"/>
<dbReference type="CAZy" id="GT2">
    <property type="family name" value="Glycosyltransferase Family 2"/>
</dbReference>
<dbReference type="PaxDb" id="39947-Q339N5"/>
<dbReference type="EnsemblPlants" id="Os10t0341700-01">
    <property type="protein sequence ID" value="Os10t0341700-01"/>
    <property type="gene ID" value="Os10g0341700"/>
</dbReference>
<dbReference type="EnsemblPlants" id="Os10t0341700-02">
    <property type="protein sequence ID" value="Os10t0341700-02"/>
    <property type="gene ID" value="Os10g0341700"/>
</dbReference>
<dbReference type="Gramene" id="Os10t0341700-01">
    <property type="protein sequence ID" value="Os10t0341700-01"/>
    <property type="gene ID" value="Os10g0341700"/>
</dbReference>
<dbReference type="Gramene" id="Os10t0341700-02">
    <property type="protein sequence ID" value="Os10t0341700-02"/>
    <property type="gene ID" value="Os10g0341700"/>
</dbReference>
<dbReference type="KEGG" id="dosa:Os10g0341700"/>
<dbReference type="eggNOG" id="ENOG502QTT0">
    <property type="taxonomic scope" value="Eukaryota"/>
</dbReference>
<dbReference type="HOGENOM" id="CLU_001418_3_3_1"/>
<dbReference type="InParanoid" id="Q339N5"/>
<dbReference type="OMA" id="LHHHYKA"/>
<dbReference type="OrthoDB" id="72851at2759"/>
<dbReference type="Proteomes" id="UP000000763">
    <property type="component" value="Chromosome 10"/>
</dbReference>
<dbReference type="Proteomes" id="UP000059680">
    <property type="component" value="Chromosome 10"/>
</dbReference>
<dbReference type="ExpressionAtlas" id="Q339N5">
    <property type="expression patterns" value="baseline and differential"/>
</dbReference>
<dbReference type="GO" id="GO:0000139">
    <property type="term" value="C:Golgi membrane"/>
    <property type="evidence" value="ECO:0007669"/>
    <property type="project" value="UniProtKB-SubCell"/>
</dbReference>
<dbReference type="GO" id="GO:0005886">
    <property type="term" value="C:plasma membrane"/>
    <property type="evidence" value="ECO:0000318"/>
    <property type="project" value="GO_Central"/>
</dbReference>
<dbReference type="GO" id="GO:0016760">
    <property type="term" value="F:cellulose synthase (UDP-forming) activity"/>
    <property type="evidence" value="ECO:0007669"/>
    <property type="project" value="InterPro"/>
</dbReference>
<dbReference type="GO" id="GO:0016759">
    <property type="term" value="F:cellulose synthase activity"/>
    <property type="evidence" value="ECO:0000318"/>
    <property type="project" value="GO_Central"/>
</dbReference>
<dbReference type="GO" id="GO:0071555">
    <property type="term" value="P:cell wall organization"/>
    <property type="evidence" value="ECO:0007669"/>
    <property type="project" value="UniProtKB-KW"/>
</dbReference>
<dbReference type="GO" id="GO:0030244">
    <property type="term" value="P:cellulose biosynthetic process"/>
    <property type="evidence" value="ECO:0000318"/>
    <property type="project" value="GO_Central"/>
</dbReference>
<dbReference type="GO" id="GO:0009833">
    <property type="term" value="P:plant-type primary cell wall biogenesis"/>
    <property type="evidence" value="ECO:0000318"/>
    <property type="project" value="GO_Central"/>
</dbReference>
<dbReference type="FunFam" id="3.90.550.10:FF:000176">
    <property type="entry name" value="Cellulose synthase-like protein B3"/>
    <property type="match status" value="1"/>
</dbReference>
<dbReference type="Gene3D" id="3.90.550.10">
    <property type="entry name" value="Spore Coat Polysaccharide Biosynthesis Protein SpsA, Chain A"/>
    <property type="match status" value="1"/>
</dbReference>
<dbReference type="InterPro" id="IPR005150">
    <property type="entry name" value="Cellulose_synth"/>
</dbReference>
<dbReference type="InterPro" id="IPR029044">
    <property type="entry name" value="Nucleotide-diphossugar_trans"/>
</dbReference>
<dbReference type="PANTHER" id="PTHR13301">
    <property type="entry name" value="X-BOX TRANSCRIPTION FACTOR-RELATED"/>
    <property type="match status" value="1"/>
</dbReference>
<dbReference type="Pfam" id="PF03552">
    <property type="entry name" value="Cellulose_synt"/>
    <property type="match status" value="2"/>
</dbReference>
<dbReference type="SUPFAM" id="SSF53448">
    <property type="entry name" value="Nucleotide-diphospho-sugar transferases"/>
    <property type="match status" value="1"/>
</dbReference>
<name>CSLH1_ORYSJ</name>
<accession>Q339N5</accession>
<accession>B7EFU3</accession>
<accession>Q7PC72</accession>
<accession>Q8LMB4</accession>
<accession>Q8W1N3</accession>
<proteinExistence type="evidence at transcript level"/>
<keyword id="KW-0961">Cell wall biogenesis/degradation</keyword>
<keyword id="KW-0328">Glycosyltransferase</keyword>
<keyword id="KW-0333">Golgi apparatus</keyword>
<keyword id="KW-0472">Membrane</keyword>
<keyword id="KW-1185">Reference proteome</keyword>
<keyword id="KW-0808">Transferase</keyword>
<keyword id="KW-0812">Transmembrane</keyword>
<keyword id="KW-1133">Transmembrane helix</keyword>
<protein>
    <recommendedName>
        <fullName>Cellulose synthase-like protein H1</fullName>
        <ecNumber>2.4.1.-</ecNumber>
    </recommendedName>
    <alternativeName>
        <fullName>OsCslH1</fullName>
    </alternativeName>
</protein>
<gene>
    <name type="primary">CSLH1</name>
    <name type="ordered locus">Os10g0341700</name>
    <name type="ordered locus">LOC_Os10g20090</name>
    <name type="ORF">OSJNBa0035F15.9</name>
</gene>
<organism>
    <name type="scientific">Oryza sativa subsp. japonica</name>
    <name type="common">Rice</name>
    <dbReference type="NCBI Taxonomy" id="39947"/>
    <lineage>
        <taxon>Eukaryota</taxon>
        <taxon>Viridiplantae</taxon>
        <taxon>Streptophyta</taxon>
        <taxon>Embryophyta</taxon>
        <taxon>Tracheophyta</taxon>
        <taxon>Spermatophyta</taxon>
        <taxon>Magnoliopsida</taxon>
        <taxon>Liliopsida</taxon>
        <taxon>Poales</taxon>
        <taxon>Poaceae</taxon>
        <taxon>BOP clade</taxon>
        <taxon>Oryzoideae</taxon>
        <taxon>Oryzeae</taxon>
        <taxon>Oryzinae</taxon>
        <taxon>Oryza</taxon>
        <taxon>Oryza sativa</taxon>
    </lineage>
</organism>
<evidence type="ECO:0000255" key="1"/>
<evidence type="ECO:0000305" key="2"/>
<sequence>MEAAARGNKKLQERVPIRRTAWRLADLAILFLLLALLLHRVLHDSGAPWRRAALACEAWFTFMWLLNVNAKWSPVRFDTFPENLAERIDELPAVDMFVTTADPVLEPPLVTVNTVLSLLALDYPAAGEKLACYVSDDGCSPLTCYALREAARFARTWVPFCRRHGVAVRAPFRYFSSTPEFGPADGKFLEDWTFMKSEYEKLVHRIEDADEPSLLRHGGGEFAEFLDVERGNHPTIIKVLWDNNRSRTGDGFPRLIYVSREKSPNLHHHYKAGAMNALTRVSALMTNAPFMLNLDCDMFVNNPRVVLHAMCLLLGFDDEISCAFVQTPQKFYGALKDDPFGNQLEVSLMKVGRGIAGLQGIFYCGTGCFHRRKVIYGMRTGREGTTGYSSNKELHSKFGSSNNFKESARDVIYGNLSTEPIVDISSCVDVAKEVAACNYEIGTCWGQEVGWVYGSLTEDVLTGQRIHAAGWRSTLMEIEPPAFMGCAPNGGPACLTQLKRWASGFLEILISRNNPILTTTFKSLQFRQCLAYLHSYVWPVRAPFELCYALLGPYCLLSNQSFLPKTSEDGFYIALALFIAYNTYMFMEFIECGQSARACWNNHRMQRITSASAWLLAFLTVILKTLGFSETVFEVTRKDKSTSDGDSNTDEPEPGRFTFDESTVFIPVTALAMLSVIAIAVGAWRVVLVTTEGLPGGPGISEFISCGWLVLCFMPLLRGLVGSGRYGIPWSIKMKACLLVAIFLLFCKRN</sequence>
<comment type="function">
    <text>Thought to be a Golgi-localized beta-glycan synthase that polymerize the backbones of noncellulosic polysaccharides (hemicelluloses) of plant cell wall.</text>
</comment>
<comment type="subcellular location">
    <subcellularLocation>
        <location evidence="2">Golgi apparatus membrane</location>
        <topology evidence="2">Multi-pass membrane protein</topology>
    </subcellularLocation>
</comment>
<comment type="similarity">
    <text evidence="2">Belongs to the glycosyltransferase 2 family. Plant cellulose synthase-like H subfamily.</text>
</comment>
<comment type="sequence caution" evidence="2">
    <conflict type="erroneous gene model prediction">
        <sequence resource="EMBL-CDS" id="AAN01252"/>
    </conflict>
</comment>
<reference key="1">
    <citation type="journal article" date="2003" name="Science">
        <title>In-depth view of structure, activity, and evolution of rice chromosome 10.</title>
        <authorList>
            <person name="Yu Y."/>
            <person name="Rambo T."/>
            <person name="Currie J."/>
            <person name="Saski C."/>
            <person name="Kim H.-R."/>
            <person name="Collura K."/>
            <person name="Thompson S."/>
            <person name="Simmons J."/>
            <person name="Yang T.-J."/>
            <person name="Nah G."/>
            <person name="Patel A.J."/>
            <person name="Thurmond S."/>
            <person name="Henry D."/>
            <person name="Oates R."/>
            <person name="Palmer M."/>
            <person name="Pries G."/>
            <person name="Gibson J."/>
            <person name="Anderson H."/>
            <person name="Paradkar M."/>
            <person name="Crane L."/>
            <person name="Dale J."/>
            <person name="Carver M.B."/>
            <person name="Wood T."/>
            <person name="Frisch D."/>
            <person name="Engler F."/>
            <person name="Soderlund C."/>
            <person name="Palmer L.E."/>
            <person name="Teytelman L."/>
            <person name="Nascimento L."/>
            <person name="De la Bastide M."/>
            <person name="Spiegel L."/>
            <person name="Ware D."/>
            <person name="O'Shaughnessy A."/>
            <person name="Dike S."/>
            <person name="Dedhia N."/>
            <person name="Preston R."/>
            <person name="Huang E."/>
            <person name="Ferraro K."/>
            <person name="Kuit K."/>
            <person name="Miller B."/>
            <person name="Zutavern T."/>
            <person name="Katzenberger F."/>
            <person name="Muller S."/>
            <person name="Balija V."/>
            <person name="Martienssen R.A."/>
            <person name="Stein L."/>
            <person name="Minx P."/>
            <person name="Johnson D."/>
            <person name="Cordum H."/>
            <person name="Mardis E."/>
            <person name="Cheng Z."/>
            <person name="Jiang J."/>
            <person name="Wilson R."/>
            <person name="McCombie W.R."/>
            <person name="Wing R.A."/>
            <person name="Yuan Q."/>
            <person name="Ouyang S."/>
            <person name="Liu J."/>
            <person name="Jones K.M."/>
            <person name="Gansberger K."/>
            <person name="Moffat K."/>
            <person name="Hill J."/>
            <person name="Tsitrin T."/>
            <person name="Overton L."/>
            <person name="Bera J."/>
            <person name="Kim M."/>
            <person name="Jin S."/>
            <person name="Tallon L."/>
            <person name="Ciecko A."/>
            <person name="Pai G."/>
            <person name="Van Aken S."/>
            <person name="Utterback T."/>
            <person name="Reidmuller S."/>
            <person name="Bormann J."/>
            <person name="Feldblyum T."/>
            <person name="Hsiao J."/>
            <person name="Zismann V."/>
            <person name="Blunt S."/>
            <person name="de Vazeille A.R."/>
            <person name="Shaffer T."/>
            <person name="Koo H."/>
            <person name="Suh B."/>
            <person name="Yang Q."/>
            <person name="Haas B."/>
            <person name="Peterson J."/>
            <person name="Pertea M."/>
            <person name="Volfovsky N."/>
            <person name="Wortman J."/>
            <person name="White O."/>
            <person name="Salzberg S.L."/>
            <person name="Fraser C.M."/>
            <person name="Buell C.R."/>
            <person name="Messing J."/>
            <person name="Song R."/>
            <person name="Fuks G."/>
            <person name="Llaca V."/>
            <person name="Kovchak S."/>
            <person name="Young S."/>
            <person name="Bowers J.E."/>
            <person name="Paterson A.H."/>
            <person name="Johns M.A."/>
            <person name="Mao L."/>
            <person name="Pan H."/>
            <person name="Dean R.A."/>
        </authorList>
    </citation>
    <scope>NUCLEOTIDE SEQUENCE [LARGE SCALE GENOMIC DNA]</scope>
    <source>
        <strain>cv. Nipponbare</strain>
    </source>
</reference>
<reference key="2">
    <citation type="journal article" date="2005" name="Nature">
        <title>The map-based sequence of the rice genome.</title>
        <authorList>
            <consortium name="International rice genome sequencing project (IRGSP)"/>
        </authorList>
    </citation>
    <scope>NUCLEOTIDE SEQUENCE [LARGE SCALE GENOMIC DNA]</scope>
    <source>
        <strain>cv. Nipponbare</strain>
    </source>
</reference>
<reference key="3">
    <citation type="journal article" date="2008" name="Nucleic Acids Res.">
        <title>The rice annotation project database (RAP-DB): 2008 update.</title>
        <authorList>
            <consortium name="The rice annotation project (RAP)"/>
        </authorList>
    </citation>
    <scope>GENOME REANNOTATION</scope>
    <source>
        <strain>cv. Nipponbare</strain>
    </source>
</reference>
<reference key="4">
    <citation type="journal article" date="2013" name="Rice">
        <title>Improvement of the Oryza sativa Nipponbare reference genome using next generation sequence and optical map data.</title>
        <authorList>
            <person name="Kawahara Y."/>
            <person name="de la Bastide M."/>
            <person name="Hamilton J.P."/>
            <person name="Kanamori H."/>
            <person name="McCombie W.R."/>
            <person name="Ouyang S."/>
            <person name="Schwartz D.C."/>
            <person name="Tanaka T."/>
            <person name="Wu J."/>
            <person name="Zhou S."/>
            <person name="Childs K.L."/>
            <person name="Davidson R.M."/>
            <person name="Lin H."/>
            <person name="Quesada-Ocampo L."/>
            <person name="Vaillancourt B."/>
            <person name="Sakai H."/>
            <person name="Lee S.S."/>
            <person name="Kim J."/>
            <person name="Numa H."/>
            <person name="Itoh T."/>
            <person name="Buell C.R."/>
            <person name="Matsumoto T."/>
        </authorList>
    </citation>
    <scope>GENOME REANNOTATION</scope>
    <source>
        <strain>cv. Nipponbare</strain>
    </source>
</reference>
<reference key="5">
    <citation type="journal article" date="2003" name="Science">
        <title>Collection, mapping, and annotation of over 28,000 cDNA clones from japonica rice.</title>
        <authorList>
            <consortium name="The rice full-length cDNA consortium"/>
        </authorList>
    </citation>
    <scope>NUCLEOTIDE SEQUENCE [LARGE SCALE MRNA]</scope>
    <source>
        <strain>cv. Nipponbare</strain>
    </source>
</reference>
<reference key="6">
    <citation type="journal article" date="2002" name="Plant Physiol.">
        <title>Cellulose synthase-like genes of rice.</title>
        <authorList>
            <person name="Hazen S.P."/>
            <person name="Scott-Craig J.S."/>
            <person name="Walton J.D."/>
        </authorList>
    </citation>
    <scope>NUCLEOTIDE SEQUENCE [MRNA] OF 8-750</scope>
    <scope>IDENTIFICATION</scope>
</reference>